<gene>
    <name type="primary">katA</name>
</gene>
<reference key="1">
    <citation type="journal article" date="2000" name="Food Sci. Technol. Res.">
        <title>Purification and gene cloning of catalase from Staphylococcus warneri ISK-1.</title>
        <authorList>
            <person name="Mizuno K."/>
            <person name="Fukuda D."/>
            <person name="Kakihara M."/>
            <person name="Kohno M."/>
            <person name="Ha T.L."/>
            <person name="Sonomoto K."/>
            <person name="Ishizaki A."/>
        </authorList>
        <dbReference type="AGRICOLA" id="IND23261977"/>
    </citation>
    <scope>NUCLEOTIDE SEQUENCE [GENOMIC DNA]</scope>
    <source>
        <strain>ISK-1</strain>
    </source>
</reference>
<keyword id="KW-0349">Heme</keyword>
<keyword id="KW-0376">Hydrogen peroxide</keyword>
<keyword id="KW-0408">Iron</keyword>
<keyword id="KW-0479">Metal-binding</keyword>
<keyword id="KW-0560">Oxidoreductase</keyword>
<keyword id="KW-0575">Peroxidase</keyword>
<comment type="function">
    <text evidence="1">Decomposes hydrogen peroxide into water and oxygen; serves to protect cells from the toxic effects of hydrogen peroxide.</text>
</comment>
<comment type="catalytic activity">
    <reaction evidence="2">
        <text>2 H2O2 = O2 + 2 H2O</text>
        <dbReference type="Rhea" id="RHEA:20309"/>
        <dbReference type="ChEBI" id="CHEBI:15377"/>
        <dbReference type="ChEBI" id="CHEBI:15379"/>
        <dbReference type="ChEBI" id="CHEBI:16240"/>
        <dbReference type="EC" id="1.11.1.6"/>
    </reaction>
</comment>
<comment type="cofactor">
    <cofactor evidence="1">
        <name>heme</name>
        <dbReference type="ChEBI" id="CHEBI:30413"/>
    </cofactor>
</comment>
<comment type="subunit">
    <text evidence="1">Homodimer.</text>
</comment>
<comment type="similarity">
    <text evidence="4">Belongs to the catalase family.</text>
</comment>
<name>CATA_STAWA</name>
<proteinExistence type="inferred from homology"/>
<feature type="chain" id="PRO_0000085008" description="Catalase">
    <location>
        <begin position="1"/>
        <end position="505"/>
    </location>
</feature>
<feature type="region of interest" description="Disordered" evidence="3">
    <location>
        <begin position="1"/>
        <end position="25"/>
    </location>
</feature>
<feature type="active site" evidence="2">
    <location>
        <position position="56"/>
    </location>
</feature>
<feature type="active site" evidence="2">
    <location>
        <position position="129"/>
    </location>
</feature>
<feature type="binding site" description="axial binding residue" evidence="1">
    <location>
        <position position="339"/>
    </location>
    <ligand>
        <name>heme</name>
        <dbReference type="ChEBI" id="CHEBI:30413"/>
    </ligand>
    <ligandPart>
        <name>Fe</name>
        <dbReference type="ChEBI" id="CHEBI:18248"/>
    </ligandPart>
</feature>
<dbReference type="EC" id="1.11.1.6"/>
<dbReference type="EMBL" id="AB045340">
    <property type="protein sequence ID" value="BAA97560.1"/>
    <property type="molecule type" value="Genomic_DNA"/>
</dbReference>
<dbReference type="SMR" id="Q9KW19"/>
<dbReference type="STRING" id="1194526.A284_06960"/>
<dbReference type="GO" id="GO:0005737">
    <property type="term" value="C:cytoplasm"/>
    <property type="evidence" value="ECO:0007669"/>
    <property type="project" value="TreeGrafter"/>
</dbReference>
<dbReference type="GO" id="GO:0004096">
    <property type="term" value="F:catalase activity"/>
    <property type="evidence" value="ECO:0007669"/>
    <property type="project" value="UniProtKB-EC"/>
</dbReference>
<dbReference type="GO" id="GO:0020037">
    <property type="term" value="F:heme binding"/>
    <property type="evidence" value="ECO:0007669"/>
    <property type="project" value="InterPro"/>
</dbReference>
<dbReference type="GO" id="GO:0046872">
    <property type="term" value="F:metal ion binding"/>
    <property type="evidence" value="ECO:0007669"/>
    <property type="project" value="UniProtKB-KW"/>
</dbReference>
<dbReference type="GO" id="GO:0042744">
    <property type="term" value="P:hydrogen peroxide catabolic process"/>
    <property type="evidence" value="ECO:0007669"/>
    <property type="project" value="UniProtKB-KW"/>
</dbReference>
<dbReference type="GO" id="GO:0042542">
    <property type="term" value="P:response to hydrogen peroxide"/>
    <property type="evidence" value="ECO:0007669"/>
    <property type="project" value="TreeGrafter"/>
</dbReference>
<dbReference type="CDD" id="cd08156">
    <property type="entry name" value="catalase_clade_3"/>
    <property type="match status" value="1"/>
</dbReference>
<dbReference type="FunFam" id="2.40.180.10:FF:000001">
    <property type="entry name" value="Catalase"/>
    <property type="match status" value="1"/>
</dbReference>
<dbReference type="Gene3D" id="2.40.180.10">
    <property type="entry name" value="Catalase core domain"/>
    <property type="match status" value="1"/>
</dbReference>
<dbReference type="InterPro" id="IPR018028">
    <property type="entry name" value="Catalase"/>
</dbReference>
<dbReference type="InterPro" id="IPR040333">
    <property type="entry name" value="Catalase_3"/>
</dbReference>
<dbReference type="InterPro" id="IPR024708">
    <property type="entry name" value="Catalase_AS"/>
</dbReference>
<dbReference type="InterPro" id="IPR024711">
    <property type="entry name" value="Catalase_clade1/3"/>
</dbReference>
<dbReference type="InterPro" id="IPR011614">
    <property type="entry name" value="Catalase_core"/>
</dbReference>
<dbReference type="InterPro" id="IPR002226">
    <property type="entry name" value="Catalase_haem_BS"/>
</dbReference>
<dbReference type="InterPro" id="IPR010582">
    <property type="entry name" value="Catalase_immune_responsive"/>
</dbReference>
<dbReference type="InterPro" id="IPR020835">
    <property type="entry name" value="Catalase_sf"/>
</dbReference>
<dbReference type="PANTHER" id="PTHR11465">
    <property type="entry name" value="CATALASE"/>
    <property type="match status" value="1"/>
</dbReference>
<dbReference type="PANTHER" id="PTHR11465:SF61">
    <property type="entry name" value="CATALASE"/>
    <property type="match status" value="1"/>
</dbReference>
<dbReference type="Pfam" id="PF00199">
    <property type="entry name" value="Catalase"/>
    <property type="match status" value="1"/>
</dbReference>
<dbReference type="Pfam" id="PF06628">
    <property type="entry name" value="Catalase-rel"/>
    <property type="match status" value="1"/>
</dbReference>
<dbReference type="PIRSF" id="PIRSF038928">
    <property type="entry name" value="Catalase_clade1-3"/>
    <property type="match status" value="1"/>
</dbReference>
<dbReference type="PRINTS" id="PR00067">
    <property type="entry name" value="CATALASE"/>
</dbReference>
<dbReference type="SMART" id="SM01060">
    <property type="entry name" value="Catalase"/>
    <property type="match status" value="1"/>
</dbReference>
<dbReference type="SUPFAM" id="SSF56634">
    <property type="entry name" value="Heme-dependent catalase-like"/>
    <property type="match status" value="1"/>
</dbReference>
<dbReference type="PROSITE" id="PS00437">
    <property type="entry name" value="CATALASE_1"/>
    <property type="match status" value="1"/>
</dbReference>
<dbReference type="PROSITE" id="PS00438">
    <property type="entry name" value="CATALASE_2"/>
    <property type="match status" value="1"/>
</dbReference>
<dbReference type="PROSITE" id="PS51402">
    <property type="entry name" value="CATALASE_3"/>
    <property type="match status" value="1"/>
</dbReference>
<evidence type="ECO:0000250" key="1"/>
<evidence type="ECO:0000255" key="2">
    <source>
        <dbReference type="PROSITE-ProRule" id="PRU10013"/>
    </source>
</evidence>
<evidence type="ECO:0000256" key="3">
    <source>
        <dbReference type="SAM" id="MobiDB-lite"/>
    </source>
</evidence>
<evidence type="ECO:0000305" key="4"/>
<sequence>MSKQDGKLTGLFGAPVSDRENSMTAGPRGPLLMQDIYFLEQMSHFDREVIPERRMHAKGSGAFGTFTVTNDITQYTSAKMFSEVGKQTEMFARFSTVSGERGAADAERDIRGFALKFYTEDGNWDLVGNNTPVFFFRDPKLFVSLNRAVKRDPRTNMRSAQNNWDFWTGLPEALHQVTILMSDRGIPKDLRHMHGFGSHTYSMYNDKGERVWVKYHFRTQQGIENLTDEEAANVIATDRDSSQRDLFNAIENGDYPKWKMYIQVMTEEQARNHKDNPFDLTKVWYHGDYPLIEVGEFELNRNPNNYFQDVEQAAFAPTNIVPGLDYSPDKMLQGRLFPYGDAQRYRLGVNHWQIPVNQPKGVGIENLCPFSRDGQMRILDDNQGGGPHYYPNNQGVYDSQPEFKKPPFPADGDGYEYNQRQDDDNYFEQPGKLFRLQSDEAKERIFTNTANAMDGVTEDVKRRHIRHCYKADPDYGKGVAKALGIDINSIDLEGEQDETYENFKN</sequence>
<protein>
    <recommendedName>
        <fullName>Catalase</fullName>
        <ecNumber>1.11.1.6</ecNumber>
    </recommendedName>
</protein>
<organism>
    <name type="scientific">Staphylococcus warneri</name>
    <dbReference type="NCBI Taxonomy" id="1292"/>
    <lineage>
        <taxon>Bacteria</taxon>
        <taxon>Bacillati</taxon>
        <taxon>Bacillota</taxon>
        <taxon>Bacilli</taxon>
        <taxon>Bacillales</taxon>
        <taxon>Staphylococcaceae</taxon>
        <taxon>Staphylococcus</taxon>
    </lineage>
</organism>
<accession>Q9KW19</accession>